<evidence type="ECO:0000255" key="1">
    <source>
        <dbReference type="HAMAP-Rule" id="MF_01148"/>
    </source>
</evidence>
<evidence type="ECO:0000305" key="2"/>
<comment type="function">
    <text evidence="1">Catalyzes the phospholipid dependent N-acylation of the N-terminal cysteine of apolipoprotein, the last step in lipoprotein maturation.</text>
</comment>
<comment type="catalytic activity">
    <reaction evidence="1">
        <text>N-terminal S-1,2-diacyl-sn-glyceryl-L-cysteinyl-[lipoprotein] + a glycerophospholipid = N-acyl-S-1,2-diacyl-sn-glyceryl-L-cysteinyl-[lipoprotein] + a 2-acyl-sn-glycero-3-phospholipid + H(+)</text>
        <dbReference type="Rhea" id="RHEA:48228"/>
        <dbReference type="Rhea" id="RHEA-COMP:14681"/>
        <dbReference type="Rhea" id="RHEA-COMP:14684"/>
        <dbReference type="ChEBI" id="CHEBI:15378"/>
        <dbReference type="ChEBI" id="CHEBI:136912"/>
        <dbReference type="ChEBI" id="CHEBI:140656"/>
        <dbReference type="ChEBI" id="CHEBI:140657"/>
        <dbReference type="ChEBI" id="CHEBI:140660"/>
        <dbReference type="EC" id="2.3.1.269"/>
    </reaction>
</comment>
<comment type="pathway">
    <text evidence="1">Protein modification; lipoprotein biosynthesis (N-acyl transfer).</text>
</comment>
<comment type="subcellular location">
    <subcellularLocation>
        <location evidence="1">Cell inner membrane</location>
        <topology evidence="1">Multi-pass membrane protein</topology>
    </subcellularLocation>
</comment>
<comment type="similarity">
    <text evidence="1 2">Belongs to the CN hydrolase family. Apolipoprotein N-acyltransferase subfamily.</text>
</comment>
<reference key="1">
    <citation type="journal article" date="1999" name="Nat. Genet.">
        <title>Comparative genomes of Chlamydia pneumoniae and C. trachomatis.</title>
        <authorList>
            <person name="Kalman S."/>
            <person name="Mitchell W.P."/>
            <person name="Marathe R."/>
            <person name="Lammel C.J."/>
            <person name="Fan J."/>
            <person name="Hyman R.W."/>
            <person name="Olinger L."/>
            <person name="Grimwood J."/>
            <person name="Davis R.W."/>
            <person name="Stephens R.S."/>
        </authorList>
    </citation>
    <scope>NUCLEOTIDE SEQUENCE [LARGE SCALE GENOMIC DNA]</scope>
    <source>
        <strain>CWL029</strain>
    </source>
</reference>
<reference key="2">
    <citation type="journal article" date="2000" name="Nucleic Acids Res.">
        <title>Genome sequences of Chlamydia trachomatis MoPn and Chlamydia pneumoniae AR39.</title>
        <authorList>
            <person name="Read T.D."/>
            <person name="Brunham R.C."/>
            <person name="Shen C."/>
            <person name="Gill S.R."/>
            <person name="Heidelberg J.F."/>
            <person name="White O."/>
            <person name="Hickey E.K."/>
            <person name="Peterson J.D."/>
            <person name="Utterback T.R."/>
            <person name="Berry K.J."/>
            <person name="Bass S."/>
            <person name="Linher K.D."/>
            <person name="Weidman J.F."/>
            <person name="Khouri H.M."/>
            <person name="Craven B."/>
            <person name="Bowman C."/>
            <person name="Dodson R.J."/>
            <person name="Gwinn M.L."/>
            <person name="Nelson W.C."/>
            <person name="DeBoy R.T."/>
            <person name="Kolonay J.F."/>
            <person name="McClarty G."/>
            <person name="Salzberg S.L."/>
            <person name="Eisen J.A."/>
            <person name="Fraser C.M."/>
        </authorList>
    </citation>
    <scope>NUCLEOTIDE SEQUENCE [LARGE SCALE GENOMIC DNA]</scope>
    <source>
        <strain>AR39</strain>
    </source>
</reference>
<reference key="3">
    <citation type="journal article" date="2000" name="Nucleic Acids Res.">
        <title>Comparison of whole genome sequences of Chlamydia pneumoniae J138 from Japan and CWL029 from USA.</title>
        <authorList>
            <person name="Shirai M."/>
            <person name="Hirakawa H."/>
            <person name="Kimoto M."/>
            <person name="Tabuchi M."/>
            <person name="Kishi F."/>
            <person name="Ouchi K."/>
            <person name="Shiba T."/>
            <person name="Ishii K."/>
            <person name="Hattori M."/>
            <person name="Kuhara S."/>
            <person name="Nakazawa T."/>
        </authorList>
    </citation>
    <scope>NUCLEOTIDE SEQUENCE [LARGE SCALE GENOMIC DNA]</scope>
    <source>
        <strain>J138</strain>
    </source>
</reference>
<reference key="4">
    <citation type="submission" date="2002-05" db="EMBL/GenBank/DDBJ databases">
        <title>The genome sequence of Chlamydia pneumoniae TW183 and comparison with other Chlamydia strains based on whole genome sequence analysis.</title>
        <authorList>
            <person name="Geng M.M."/>
            <person name="Schuhmacher A."/>
            <person name="Muehldorfer I."/>
            <person name="Bensch K.W."/>
            <person name="Schaefer K.P."/>
            <person name="Schneider S."/>
            <person name="Pohl T."/>
            <person name="Essig A."/>
            <person name="Marre R."/>
            <person name="Melchers K."/>
        </authorList>
    </citation>
    <scope>NUCLEOTIDE SEQUENCE [LARGE SCALE GENOMIC DNA]</scope>
    <source>
        <strain>TW-183</strain>
    </source>
</reference>
<gene>
    <name evidence="1" type="primary">lnt</name>
    <name type="ordered locus">CPn_0653</name>
    <name type="ordered locus">CP_0094</name>
    <name type="ordered locus">CPj0653</name>
    <name type="ordered locus">CpB0679</name>
</gene>
<organism>
    <name type="scientific">Chlamydia pneumoniae</name>
    <name type="common">Chlamydophila pneumoniae</name>
    <dbReference type="NCBI Taxonomy" id="83558"/>
    <lineage>
        <taxon>Bacteria</taxon>
        <taxon>Pseudomonadati</taxon>
        <taxon>Chlamydiota</taxon>
        <taxon>Chlamydiia</taxon>
        <taxon>Chlamydiales</taxon>
        <taxon>Chlamydiaceae</taxon>
        <taxon>Chlamydia/Chlamydophila group</taxon>
        <taxon>Chlamydia</taxon>
    </lineage>
</organism>
<keyword id="KW-0012">Acyltransferase</keyword>
<keyword id="KW-0997">Cell inner membrane</keyword>
<keyword id="KW-1003">Cell membrane</keyword>
<keyword id="KW-0472">Membrane</keyword>
<keyword id="KW-0808">Transferase</keyword>
<keyword id="KW-0812">Transmembrane</keyword>
<keyword id="KW-1133">Transmembrane helix</keyword>
<accession>Q9Z7Q1</accession>
<accession>Q9JQG2</accession>
<sequence length="541" mass="61260">MLRIFCFVISWCLIAFAQPDLSGFVSILGAACGYGFFWYSLEPLKKPSLPLRTLFVSCFFWIFTIEGIHFSWMLSDQYIGKLIYLVWLTLITILSVLFSGFSCLLVAIVRQKRTAFLWSLPGVWVAIEMLRFYGIFSGMSFDYLGWPMTASAYGRQFGGFLGWAGQSFAVIAVNMSFYCLLLKKPHAKMLWVLTLLLPYTFGAIHYEYLKHAFQQDKRALRVAVVQPAHPPIRPKLKSPIVVWEQLLQLVSPIQQPIDLLIFPEVVVPFGKHRQVYPYESCAHLLSSFAPLPEGKAFLSNSDCATALSQHFQCPVIIGLERWVKKENVLYWYNSAEVISHKGISVGYDKRILVPGGEYIPGGKFGSLICRQLFPKYALGCKRLPGRRSGVVQVRGLPRIGITICYEETFGYRLQSYKRQGAELLVNLTNDGWYPESRLPKVHFLHGMLRNQEFGMPCVRACQTGVTAAVDSLGRILKILPYDTRETKAPSGVLETSLPLFNYKTLYGYCGDYPMILIAFCAVSYLGGGFLGYRLLAKKEIR</sequence>
<proteinExistence type="inferred from homology"/>
<protein>
    <recommendedName>
        <fullName evidence="1">Apolipoprotein N-acyltransferase</fullName>
        <shortName evidence="1">ALP N-acyltransferase</shortName>
        <ecNumber evidence="1">2.3.1.269</ecNumber>
    </recommendedName>
</protein>
<feature type="chain" id="PRO_0000178057" description="Apolipoprotein N-acyltransferase">
    <location>
        <begin position="1"/>
        <end position="541"/>
    </location>
</feature>
<feature type="transmembrane region" description="Helical" evidence="1">
    <location>
        <begin position="21"/>
        <end position="41"/>
    </location>
</feature>
<feature type="transmembrane region" description="Helical" evidence="1">
    <location>
        <begin position="54"/>
        <end position="74"/>
    </location>
</feature>
<feature type="transmembrane region" description="Helical" evidence="1">
    <location>
        <begin position="82"/>
        <end position="102"/>
    </location>
</feature>
<feature type="transmembrane region" description="Helical" evidence="1">
    <location>
        <begin position="116"/>
        <end position="136"/>
    </location>
</feature>
<feature type="transmembrane region" description="Helical" evidence="1">
    <location>
        <begin position="157"/>
        <end position="177"/>
    </location>
</feature>
<feature type="transmembrane region" description="Helical" evidence="1">
    <location>
        <begin position="189"/>
        <end position="209"/>
    </location>
</feature>
<feature type="transmembrane region" description="Helical" evidence="1">
    <location>
        <begin position="512"/>
        <end position="532"/>
    </location>
</feature>
<feature type="domain" description="CN hydrolase" evidence="1">
    <location>
        <begin position="220"/>
        <end position="499"/>
    </location>
</feature>
<feature type="active site" description="Proton acceptor" evidence="1">
    <location>
        <position position="264"/>
    </location>
</feature>
<feature type="active site" evidence="1">
    <location>
        <position position="349"/>
    </location>
</feature>
<feature type="active site" description="Nucleophile" evidence="1">
    <location>
        <position position="404"/>
    </location>
</feature>
<dbReference type="EC" id="2.3.1.269" evidence="1"/>
<dbReference type="EMBL" id="AE001363">
    <property type="protein sequence ID" value="AAD18792.1"/>
    <property type="molecule type" value="Genomic_DNA"/>
</dbReference>
<dbReference type="EMBL" id="AE002161">
    <property type="protein sequence ID" value="AAF37978.1"/>
    <property type="molecule type" value="Genomic_DNA"/>
</dbReference>
<dbReference type="EMBL" id="BA000008">
    <property type="protein sequence ID" value="BAA98860.1"/>
    <property type="molecule type" value="Genomic_DNA"/>
</dbReference>
<dbReference type="EMBL" id="AE009440">
    <property type="protein sequence ID" value="AAP98608.1"/>
    <property type="molecule type" value="Genomic_DNA"/>
</dbReference>
<dbReference type="PIR" id="B86572">
    <property type="entry name" value="B86572"/>
</dbReference>
<dbReference type="PIR" id="F72051">
    <property type="entry name" value="F72051"/>
</dbReference>
<dbReference type="RefSeq" id="NP_224849.1">
    <property type="nucleotide sequence ID" value="NC_000922.1"/>
</dbReference>
<dbReference type="RefSeq" id="WP_010883291.1">
    <property type="nucleotide sequence ID" value="NZ_LN847257.1"/>
</dbReference>
<dbReference type="SMR" id="Q9Z7Q1"/>
<dbReference type="STRING" id="406984.CPK_ORF00053"/>
<dbReference type="GeneID" id="45050703"/>
<dbReference type="KEGG" id="cpa:CP_0094"/>
<dbReference type="KEGG" id="cpj:cutE"/>
<dbReference type="KEGG" id="cpn:CPn_0653"/>
<dbReference type="KEGG" id="cpt:CpB0679"/>
<dbReference type="PATRIC" id="fig|115713.3.peg.723"/>
<dbReference type="eggNOG" id="COG0815">
    <property type="taxonomic scope" value="Bacteria"/>
</dbReference>
<dbReference type="HOGENOM" id="CLU_019563_1_2_0"/>
<dbReference type="UniPathway" id="UPA00666"/>
<dbReference type="Proteomes" id="UP000000583">
    <property type="component" value="Chromosome"/>
</dbReference>
<dbReference type="Proteomes" id="UP000000801">
    <property type="component" value="Chromosome"/>
</dbReference>
<dbReference type="GO" id="GO:0005886">
    <property type="term" value="C:plasma membrane"/>
    <property type="evidence" value="ECO:0007669"/>
    <property type="project" value="UniProtKB-SubCell"/>
</dbReference>
<dbReference type="GO" id="GO:0016410">
    <property type="term" value="F:N-acyltransferase activity"/>
    <property type="evidence" value="ECO:0007669"/>
    <property type="project" value="UniProtKB-UniRule"/>
</dbReference>
<dbReference type="GO" id="GO:0042158">
    <property type="term" value="P:lipoprotein biosynthetic process"/>
    <property type="evidence" value="ECO:0007669"/>
    <property type="project" value="UniProtKB-UniRule"/>
</dbReference>
<dbReference type="CDD" id="cd07571">
    <property type="entry name" value="ALP_N-acyl_transferase"/>
    <property type="match status" value="1"/>
</dbReference>
<dbReference type="Gene3D" id="3.60.110.10">
    <property type="entry name" value="Carbon-nitrogen hydrolase"/>
    <property type="match status" value="1"/>
</dbReference>
<dbReference type="HAMAP" id="MF_01148">
    <property type="entry name" value="Lnt"/>
    <property type="match status" value="1"/>
</dbReference>
<dbReference type="InterPro" id="IPR004563">
    <property type="entry name" value="Apolipo_AcylTrfase"/>
</dbReference>
<dbReference type="InterPro" id="IPR003010">
    <property type="entry name" value="C-N_Hydrolase"/>
</dbReference>
<dbReference type="InterPro" id="IPR036526">
    <property type="entry name" value="C-N_Hydrolase_sf"/>
</dbReference>
<dbReference type="InterPro" id="IPR045378">
    <property type="entry name" value="LNT_N"/>
</dbReference>
<dbReference type="NCBIfam" id="TIGR00546">
    <property type="entry name" value="lnt"/>
    <property type="match status" value="1"/>
</dbReference>
<dbReference type="PANTHER" id="PTHR38686">
    <property type="entry name" value="APOLIPOPROTEIN N-ACYLTRANSFERASE"/>
    <property type="match status" value="1"/>
</dbReference>
<dbReference type="PANTHER" id="PTHR38686:SF1">
    <property type="entry name" value="APOLIPOPROTEIN N-ACYLTRANSFERASE"/>
    <property type="match status" value="1"/>
</dbReference>
<dbReference type="Pfam" id="PF00795">
    <property type="entry name" value="CN_hydrolase"/>
    <property type="match status" value="1"/>
</dbReference>
<dbReference type="Pfam" id="PF20154">
    <property type="entry name" value="LNT_N"/>
    <property type="match status" value="1"/>
</dbReference>
<dbReference type="SUPFAM" id="SSF56317">
    <property type="entry name" value="Carbon-nitrogen hydrolase"/>
    <property type="match status" value="1"/>
</dbReference>
<dbReference type="PROSITE" id="PS50263">
    <property type="entry name" value="CN_HYDROLASE"/>
    <property type="match status" value="1"/>
</dbReference>
<name>LNT_CHLPN</name>